<reference key="1">
    <citation type="journal article" date="2008" name="BMC Genomics">
        <title>The linear chromosome of the plant-pathogenic mycoplasma 'Candidatus Phytoplasma mali'.</title>
        <authorList>
            <person name="Kube M."/>
            <person name="Schneider B."/>
            <person name="Kuhl H."/>
            <person name="Dandekar T."/>
            <person name="Heitmann K."/>
            <person name="Migdoll A.M."/>
            <person name="Reinhardt R."/>
            <person name="Seemueller E."/>
        </authorList>
    </citation>
    <scope>NUCLEOTIDE SEQUENCE [LARGE SCALE GENOMIC DNA]</scope>
    <source>
        <strain>AT</strain>
    </source>
</reference>
<accession>B3QZT9</accession>
<evidence type="ECO:0000255" key="1">
    <source>
        <dbReference type="HAMAP-Rule" id="MF_00071"/>
    </source>
</evidence>
<organism>
    <name type="scientific">Phytoplasma mali (strain AT)</name>
    <dbReference type="NCBI Taxonomy" id="482235"/>
    <lineage>
        <taxon>Bacteria</taxon>
        <taxon>Bacillati</taxon>
        <taxon>Mycoplasmatota</taxon>
        <taxon>Mollicutes</taxon>
        <taxon>Acholeplasmatales</taxon>
        <taxon>Acholeplasmataceae</taxon>
        <taxon>Candidatus Phytoplasma</taxon>
        <taxon>16SrX (Apple proliferation group)</taxon>
    </lineage>
</organism>
<feature type="chain" id="PRO_1000190822" description="Elongation factor 4">
    <location>
        <begin position="1"/>
        <end position="605"/>
    </location>
</feature>
<feature type="domain" description="tr-type G">
    <location>
        <begin position="11"/>
        <end position="193"/>
    </location>
</feature>
<feature type="binding site" evidence="1">
    <location>
        <begin position="23"/>
        <end position="28"/>
    </location>
    <ligand>
        <name>GTP</name>
        <dbReference type="ChEBI" id="CHEBI:37565"/>
    </ligand>
</feature>
<feature type="binding site" evidence="1">
    <location>
        <begin position="140"/>
        <end position="143"/>
    </location>
    <ligand>
        <name>GTP</name>
        <dbReference type="ChEBI" id="CHEBI:37565"/>
    </ligand>
</feature>
<name>LEPA_PHYMT</name>
<proteinExistence type="inferred from homology"/>
<comment type="function">
    <text evidence="1">Required for accurate and efficient protein synthesis under certain stress conditions. May act as a fidelity factor of the translation reaction, by catalyzing a one-codon backward translocation of tRNAs on improperly translocated ribosomes. Back-translocation proceeds from a post-translocation (POST) complex to a pre-translocation (PRE) complex, thus giving elongation factor G a second chance to translocate the tRNAs correctly. Binds to ribosomes in a GTP-dependent manner.</text>
</comment>
<comment type="catalytic activity">
    <reaction evidence="1">
        <text>GTP + H2O = GDP + phosphate + H(+)</text>
        <dbReference type="Rhea" id="RHEA:19669"/>
        <dbReference type="ChEBI" id="CHEBI:15377"/>
        <dbReference type="ChEBI" id="CHEBI:15378"/>
        <dbReference type="ChEBI" id="CHEBI:37565"/>
        <dbReference type="ChEBI" id="CHEBI:43474"/>
        <dbReference type="ChEBI" id="CHEBI:58189"/>
        <dbReference type="EC" id="3.6.5.n1"/>
    </reaction>
</comment>
<comment type="subcellular location">
    <subcellularLocation>
        <location evidence="1">Cell membrane</location>
        <topology evidence="1">Peripheral membrane protein</topology>
        <orientation evidence="1">Cytoplasmic side</orientation>
    </subcellularLocation>
</comment>
<comment type="similarity">
    <text evidence="1">Belongs to the TRAFAC class translation factor GTPase superfamily. Classic translation factor GTPase family. LepA subfamily.</text>
</comment>
<protein>
    <recommendedName>
        <fullName evidence="1">Elongation factor 4</fullName>
        <shortName evidence="1">EF-4</shortName>
        <ecNumber evidence="1">3.6.5.n1</ecNumber>
    </recommendedName>
    <alternativeName>
        <fullName evidence="1">Ribosomal back-translocase LepA</fullName>
    </alternativeName>
</protein>
<sequence length="605" mass="68533">MQIKKINNKQKRIRNFSIIAHVDHGKSTLADRILEITNTVEKRLMQKQFLDSMDLEKERGITIKLNAVQIIFNDKKGDEYIMHLIDTPGHVDFNYEVSRALAACEGVILVIDATQGIQAQTLTNFYLAIENNLLIIPVINKIDLPNADVNKVRREIKDTLGIEPENTILVSGKTGVGVTEILEKVVSNIPSPRGDINEPFQSLVFDSFFDPYKGVVSLIRVFSGKIQKGDQIRFMSNNEVYEVSEVGVYSPFQTPKPFLFVGEVGYLSASIKNIDKVRVGDTITNHKNPTKQRLPGYRKIQPVVFCGLYPITCSKYETLKSALEKLKLNDASLTFEPETSVALGLGFRIGFLGLLHMEIIQERISREFDIEAITTAPSVIYHVYTKKGTKILVDNPSKWPNTQIIERVEEPFIKATIICPQIYIGTVMTLSQSKRGQLKDISYLDKNIAMIIYFFPLSEIMYNYFDKLKSVTKGYASFEYEIDSYRSSSLQKMDILLNGEVIDALSIIIHKDFAYSRGKVICSKLIECIPKQMFEVPIQVAIGKRVIVRENIKSMRKDVISKCYGGDVSRKKKLLSKQKEGKKKMKNLGKVKLPQKAFLAILSTE</sequence>
<keyword id="KW-1003">Cell membrane</keyword>
<keyword id="KW-0342">GTP-binding</keyword>
<keyword id="KW-0378">Hydrolase</keyword>
<keyword id="KW-0472">Membrane</keyword>
<keyword id="KW-0547">Nucleotide-binding</keyword>
<keyword id="KW-0648">Protein biosynthesis</keyword>
<keyword id="KW-1185">Reference proteome</keyword>
<dbReference type="EC" id="3.6.5.n1" evidence="1"/>
<dbReference type="EMBL" id="CU469464">
    <property type="protein sequence ID" value="CAP18476.1"/>
    <property type="molecule type" value="Genomic_DNA"/>
</dbReference>
<dbReference type="SMR" id="B3QZT9"/>
<dbReference type="STRING" id="37692.ATP_00289"/>
<dbReference type="KEGG" id="pml:ATP_00289"/>
<dbReference type="eggNOG" id="COG0481">
    <property type="taxonomic scope" value="Bacteria"/>
</dbReference>
<dbReference type="HOGENOM" id="CLU_009995_3_3_14"/>
<dbReference type="Proteomes" id="UP000002020">
    <property type="component" value="Chromosome"/>
</dbReference>
<dbReference type="GO" id="GO:0005886">
    <property type="term" value="C:plasma membrane"/>
    <property type="evidence" value="ECO:0007669"/>
    <property type="project" value="UniProtKB-SubCell"/>
</dbReference>
<dbReference type="GO" id="GO:0005525">
    <property type="term" value="F:GTP binding"/>
    <property type="evidence" value="ECO:0007669"/>
    <property type="project" value="UniProtKB-UniRule"/>
</dbReference>
<dbReference type="GO" id="GO:0003924">
    <property type="term" value="F:GTPase activity"/>
    <property type="evidence" value="ECO:0007669"/>
    <property type="project" value="UniProtKB-UniRule"/>
</dbReference>
<dbReference type="GO" id="GO:0043022">
    <property type="term" value="F:ribosome binding"/>
    <property type="evidence" value="ECO:0007669"/>
    <property type="project" value="UniProtKB-UniRule"/>
</dbReference>
<dbReference type="GO" id="GO:0003746">
    <property type="term" value="F:translation elongation factor activity"/>
    <property type="evidence" value="ECO:0007669"/>
    <property type="project" value="UniProtKB-UniRule"/>
</dbReference>
<dbReference type="GO" id="GO:0045727">
    <property type="term" value="P:positive regulation of translation"/>
    <property type="evidence" value="ECO:0007669"/>
    <property type="project" value="UniProtKB-UniRule"/>
</dbReference>
<dbReference type="CDD" id="cd03699">
    <property type="entry name" value="EF4_II"/>
    <property type="match status" value="1"/>
</dbReference>
<dbReference type="CDD" id="cd16260">
    <property type="entry name" value="EF4_III"/>
    <property type="match status" value="1"/>
</dbReference>
<dbReference type="CDD" id="cd01890">
    <property type="entry name" value="LepA"/>
    <property type="match status" value="1"/>
</dbReference>
<dbReference type="CDD" id="cd03709">
    <property type="entry name" value="lepA_C"/>
    <property type="match status" value="1"/>
</dbReference>
<dbReference type="FunFam" id="3.40.50.300:FF:000078">
    <property type="entry name" value="Elongation factor 4"/>
    <property type="match status" value="1"/>
</dbReference>
<dbReference type="FunFam" id="2.40.30.10:FF:000015">
    <property type="entry name" value="Translation factor GUF1, mitochondrial"/>
    <property type="match status" value="1"/>
</dbReference>
<dbReference type="FunFam" id="3.30.70.240:FF:000007">
    <property type="entry name" value="Translation factor GUF1, mitochondrial"/>
    <property type="match status" value="1"/>
</dbReference>
<dbReference type="FunFam" id="3.30.70.2570:FF:000001">
    <property type="entry name" value="Translation factor GUF1, mitochondrial"/>
    <property type="match status" value="1"/>
</dbReference>
<dbReference type="FunFam" id="3.30.70.870:FF:000004">
    <property type="entry name" value="Translation factor GUF1, mitochondrial"/>
    <property type="match status" value="1"/>
</dbReference>
<dbReference type="Gene3D" id="3.30.70.240">
    <property type="match status" value="1"/>
</dbReference>
<dbReference type="Gene3D" id="3.30.70.2570">
    <property type="entry name" value="Elongation factor 4, C-terminal domain"/>
    <property type="match status" value="1"/>
</dbReference>
<dbReference type="Gene3D" id="3.30.70.870">
    <property type="entry name" value="Elongation Factor G (Translational Gtpase), domain 3"/>
    <property type="match status" value="1"/>
</dbReference>
<dbReference type="Gene3D" id="3.40.50.300">
    <property type="entry name" value="P-loop containing nucleotide triphosphate hydrolases"/>
    <property type="match status" value="1"/>
</dbReference>
<dbReference type="Gene3D" id="2.40.30.10">
    <property type="entry name" value="Translation factors"/>
    <property type="match status" value="1"/>
</dbReference>
<dbReference type="HAMAP" id="MF_00071">
    <property type="entry name" value="LepA"/>
    <property type="match status" value="1"/>
</dbReference>
<dbReference type="InterPro" id="IPR006297">
    <property type="entry name" value="EF-4"/>
</dbReference>
<dbReference type="InterPro" id="IPR035647">
    <property type="entry name" value="EFG_III/V"/>
</dbReference>
<dbReference type="InterPro" id="IPR000640">
    <property type="entry name" value="EFG_V-like"/>
</dbReference>
<dbReference type="InterPro" id="IPR004161">
    <property type="entry name" value="EFTu-like_2"/>
</dbReference>
<dbReference type="InterPro" id="IPR031157">
    <property type="entry name" value="G_TR_CS"/>
</dbReference>
<dbReference type="InterPro" id="IPR038363">
    <property type="entry name" value="LepA_C_sf"/>
</dbReference>
<dbReference type="InterPro" id="IPR013842">
    <property type="entry name" value="LepA_CTD"/>
</dbReference>
<dbReference type="InterPro" id="IPR035654">
    <property type="entry name" value="LepA_IV"/>
</dbReference>
<dbReference type="InterPro" id="IPR027417">
    <property type="entry name" value="P-loop_NTPase"/>
</dbReference>
<dbReference type="InterPro" id="IPR005225">
    <property type="entry name" value="Small_GTP-bd"/>
</dbReference>
<dbReference type="InterPro" id="IPR000795">
    <property type="entry name" value="T_Tr_GTP-bd_dom"/>
</dbReference>
<dbReference type="InterPro" id="IPR009000">
    <property type="entry name" value="Transl_B-barrel_sf"/>
</dbReference>
<dbReference type="NCBIfam" id="TIGR01393">
    <property type="entry name" value="lepA"/>
    <property type="match status" value="1"/>
</dbReference>
<dbReference type="NCBIfam" id="TIGR00231">
    <property type="entry name" value="small_GTP"/>
    <property type="match status" value="1"/>
</dbReference>
<dbReference type="PANTHER" id="PTHR43512:SF4">
    <property type="entry name" value="TRANSLATION FACTOR GUF1 HOMOLOG, CHLOROPLASTIC"/>
    <property type="match status" value="1"/>
</dbReference>
<dbReference type="PANTHER" id="PTHR43512">
    <property type="entry name" value="TRANSLATION FACTOR GUF1-RELATED"/>
    <property type="match status" value="1"/>
</dbReference>
<dbReference type="Pfam" id="PF00679">
    <property type="entry name" value="EFG_C"/>
    <property type="match status" value="1"/>
</dbReference>
<dbReference type="Pfam" id="PF00009">
    <property type="entry name" value="GTP_EFTU"/>
    <property type="match status" value="1"/>
</dbReference>
<dbReference type="Pfam" id="PF03144">
    <property type="entry name" value="GTP_EFTU_D2"/>
    <property type="match status" value="1"/>
</dbReference>
<dbReference type="Pfam" id="PF06421">
    <property type="entry name" value="LepA_C"/>
    <property type="match status" value="1"/>
</dbReference>
<dbReference type="PRINTS" id="PR00315">
    <property type="entry name" value="ELONGATNFCT"/>
</dbReference>
<dbReference type="SMART" id="SM00838">
    <property type="entry name" value="EFG_C"/>
    <property type="match status" value="1"/>
</dbReference>
<dbReference type="SUPFAM" id="SSF54980">
    <property type="entry name" value="EF-G C-terminal domain-like"/>
    <property type="match status" value="2"/>
</dbReference>
<dbReference type="SUPFAM" id="SSF52540">
    <property type="entry name" value="P-loop containing nucleoside triphosphate hydrolases"/>
    <property type="match status" value="1"/>
</dbReference>
<dbReference type="SUPFAM" id="SSF50447">
    <property type="entry name" value="Translation proteins"/>
    <property type="match status" value="1"/>
</dbReference>
<dbReference type="PROSITE" id="PS00301">
    <property type="entry name" value="G_TR_1"/>
    <property type="match status" value="1"/>
</dbReference>
<dbReference type="PROSITE" id="PS51722">
    <property type="entry name" value="G_TR_2"/>
    <property type="match status" value="1"/>
</dbReference>
<gene>
    <name evidence="1" type="primary">lepA</name>
    <name type="ordered locus">ATP_00289</name>
</gene>